<comment type="subcellular location">
    <subcellularLocation>
        <location evidence="1">Cell outer membrane</location>
        <topology evidence="1">Lipid-anchor</topology>
    </subcellularLocation>
</comment>
<comment type="similarity">
    <text evidence="1">Belongs to the Pal lipoprotein family.</text>
</comment>
<reference key="1">
    <citation type="journal article" date="2003" name="Proc. Natl. Acad. Sci. U.S.A.">
        <title>Reductive genome evolution in Buchnera aphidicola.</title>
        <authorList>
            <person name="van Ham R.C.H.J."/>
            <person name="Kamerbeek J."/>
            <person name="Palacios C."/>
            <person name="Rausell C."/>
            <person name="Abascal F."/>
            <person name="Bastolla U."/>
            <person name="Fernandez J.M."/>
            <person name="Jimenez L."/>
            <person name="Postigo M."/>
            <person name="Silva F.J."/>
            <person name="Tamames J."/>
            <person name="Viguera E."/>
            <person name="Latorre A."/>
            <person name="Valencia A."/>
            <person name="Moran F."/>
            <person name="Moya A."/>
        </authorList>
    </citation>
    <scope>NUCLEOTIDE SEQUENCE [LARGE SCALE GENOMIC DNA]</scope>
    <source>
        <strain>Bp</strain>
    </source>
</reference>
<name>PAL_BUCBP</name>
<gene>
    <name evidence="1" type="primary">pal</name>
    <name type="ordered locus">bbp_282</name>
</gene>
<dbReference type="EMBL" id="AE016826">
    <property type="protein sequence ID" value="AAO27007.1"/>
    <property type="molecule type" value="Genomic_DNA"/>
</dbReference>
<dbReference type="RefSeq" id="WP_011091408.1">
    <property type="nucleotide sequence ID" value="NC_004545.1"/>
</dbReference>
<dbReference type="SMR" id="Q89AJ5"/>
<dbReference type="STRING" id="224915.bbp_282"/>
<dbReference type="KEGG" id="bab:bbp_282"/>
<dbReference type="eggNOG" id="COG2885">
    <property type="taxonomic scope" value="Bacteria"/>
</dbReference>
<dbReference type="HOGENOM" id="CLU_016890_9_4_6"/>
<dbReference type="OrthoDB" id="9809164at2"/>
<dbReference type="Proteomes" id="UP000000601">
    <property type="component" value="Chromosome"/>
</dbReference>
<dbReference type="GO" id="GO:0009279">
    <property type="term" value="C:cell outer membrane"/>
    <property type="evidence" value="ECO:0007669"/>
    <property type="project" value="UniProtKB-SubCell"/>
</dbReference>
<dbReference type="GO" id="GO:0051301">
    <property type="term" value="P:cell division"/>
    <property type="evidence" value="ECO:0007669"/>
    <property type="project" value="UniProtKB-UniRule"/>
</dbReference>
<dbReference type="CDD" id="cd07185">
    <property type="entry name" value="OmpA_C-like"/>
    <property type="match status" value="1"/>
</dbReference>
<dbReference type="Gene3D" id="3.30.1330.60">
    <property type="entry name" value="OmpA-like domain"/>
    <property type="match status" value="1"/>
</dbReference>
<dbReference type="HAMAP" id="MF_02204">
    <property type="entry name" value="Pal"/>
    <property type="match status" value="1"/>
</dbReference>
<dbReference type="InterPro" id="IPR050330">
    <property type="entry name" value="Bact_OuterMem_StrucFunc"/>
</dbReference>
<dbReference type="InterPro" id="IPR006664">
    <property type="entry name" value="OMP_bac"/>
</dbReference>
<dbReference type="InterPro" id="IPR006665">
    <property type="entry name" value="OmpA-like"/>
</dbReference>
<dbReference type="InterPro" id="IPR006690">
    <property type="entry name" value="OMPA-like_CS"/>
</dbReference>
<dbReference type="InterPro" id="IPR036737">
    <property type="entry name" value="OmpA-like_sf"/>
</dbReference>
<dbReference type="InterPro" id="IPR039001">
    <property type="entry name" value="Pal"/>
</dbReference>
<dbReference type="PANTHER" id="PTHR30329:SF21">
    <property type="entry name" value="LIPOPROTEIN YIAD-RELATED"/>
    <property type="match status" value="1"/>
</dbReference>
<dbReference type="PANTHER" id="PTHR30329">
    <property type="entry name" value="STATOR ELEMENT OF FLAGELLAR MOTOR COMPLEX"/>
    <property type="match status" value="1"/>
</dbReference>
<dbReference type="Pfam" id="PF00691">
    <property type="entry name" value="OmpA"/>
    <property type="match status" value="1"/>
</dbReference>
<dbReference type="PRINTS" id="PR01021">
    <property type="entry name" value="OMPADOMAIN"/>
</dbReference>
<dbReference type="SUPFAM" id="SSF103088">
    <property type="entry name" value="OmpA-like"/>
    <property type="match status" value="1"/>
</dbReference>
<dbReference type="PROSITE" id="PS01068">
    <property type="entry name" value="OMPA_1"/>
    <property type="match status" value="1"/>
</dbReference>
<dbReference type="PROSITE" id="PS51123">
    <property type="entry name" value="OMPA_2"/>
    <property type="match status" value="1"/>
</dbReference>
<dbReference type="PROSITE" id="PS51257">
    <property type="entry name" value="PROKAR_LIPOPROTEIN"/>
    <property type="match status" value="1"/>
</dbReference>
<protein>
    <recommendedName>
        <fullName evidence="1">Peptidoglycan-associated lipoprotein</fullName>
        <shortName evidence="1">PAL</shortName>
    </recommendedName>
</protein>
<sequence>MKSKKIFKILTLLLPMITTFSCSFPKNKLNSNNVDTFYEQETNKSKQQLTNFSEDNFDETLEKLKKGNTIYFPFNNHQVNSKYAKNLNDLAQFLCHHSNQKIMIEGHTDSRGTNKYNMYLGQKRADSVKLYLESKGVSNQQITTVSYGSSKPVAHGNKENSYSKNRRSVIIYQ</sequence>
<proteinExistence type="inferred from homology"/>
<keyword id="KW-0998">Cell outer membrane</keyword>
<keyword id="KW-0449">Lipoprotein</keyword>
<keyword id="KW-0472">Membrane</keyword>
<keyword id="KW-0564">Palmitate</keyword>
<keyword id="KW-1185">Reference proteome</keyword>
<keyword id="KW-0732">Signal</keyword>
<feature type="signal peptide" evidence="1">
    <location>
        <begin position="1"/>
        <end position="21"/>
    </location>
</feature>
<feature type="chain" id="PRO_0000020119" description="Peptidoglycan-associated lipoprotein" evidence="1">
    <location>
        <begin position="22"/>
        <end position="173"/>
    </location>
</feature>
<feature type="domain" description="OmpA-like" evidence="1">
    <location>
        <begin position="59"/>
        <end position="173"/>
    </location>
</feature>
<feature type="lipid moiety-binding region" description="N-palmitoyl cysteine" evidence="1">
    <location>
        <position position="22"/>
    </location>
</feature>
<feature type="lipid moiety-binding region" description="S-diacylglycerol cysteine" evidence="1">
    <location>
        <position position="22"/>
    </location>
</feature>
<accession>Q89AJ5</accession>
<evidence type="ECO:0000255" key="1">
    <source>
        <dbReference type="HAMAP-Rule" id="MF_02204"/>
    </source>
</evidence>
<organism>
    <name type="scientific">Buchnera aphidicola subsp. Baizongia pistaciae (strain Bp)</name>
    <dbReference type="NCBI Taxonomy" id="224915"/>
    <lineage>
        <taxon>Bacteria</taxon>
        <taxon>Pseudomonadati</taxon>
        <taxon>Pseudomonadota</taxon>
        <taxon>Gammaproteobacteria</taxon>
        <taxon>Enterobacterales</taxon>
        <taxon>Erwiniaceae</taxon>
        <taxon>Buchnera</taxon>
    </lineage>
</organism>